<dbReference type="EMBL" id="AF358139">
    <property type="protein sequence ID" value="AAL11633.1"/>
    <property type="molecule type" value="mRNA"/>
</dbReference>
<dbReference type="SMR" id="Q95WA2"/>
<dbReference type="FunCoup" id="Q95WA2">
    <property type="interactions" value="1546"/>
</dbReference>
<dbReference type="STRING" id="6183.Q95WA2"/>
<dbReference type="eggNOG" id="KOG1727">
    <property type="taxonomic scope" value="Eukaryota"/>
</dbReference>
<dbReference type="HOGENOM" id="CLU_095877_0_1_1"/>
<dbReference type="InParanoid" id="Q95WA2"/>
<dbReference type="Proteomes" id="UP000008854">
    <property type="component" value="Unassembled WGS sequence"/>
</dbReference>
<dbReference type="GO" id="GO:0005737">
    <property type="term" value="C:cytoplasm"/>
    <property type="evidence" value="ECO:0007669"/>
    <property type="project" value="UniProtKB-SubCell"/>
</dbReference>
<dbReference type="GO" id="GO:0005509">
    <property type="term" value="F:calcium ion binding"/>
    <property type="evidence" value="ECO:0007669"/>
    <property type="project" value="TreeGrafter"/>
</dbReference>
<dbReference type="Gene3D" id="2.170.150.10">
    <property type="entry name" value="Metal Binding Protein, Guanine Nucleotide Exchange Factor, Chain A"/>
    <property type="match status" value="1"/>
</dbReference>
<dbReference type="InterPro" id="IPR011057">
    <property type="entry name" value="Mss4-like_sf"/>
</dbReference>
<dbReference type="InterPro" id="IPR011323">
    <property type="entry name" value="Mss4/transl-control_tumour"/>
</dbReference>
<dbReference type="InterPro" id="IPR034737">
    <property type="entry name" value="TCTP"/>
</dbReference>
<dbReference type="InterPro" id="IPR018103">
    <property type="entry name" value="Translation_control_tumour_CS"/>
</dbReference>
<dbReference type="InterPro" id="IPR018105">
    <property type="entry name" value="Translational_control_tumour_p"/>
</dbReference>
<dbReference type="PANTHER" id="PTHR11991">
    <property type="entry name" value="TRANSLATIONALLY CONTROLLED TUMOR PROTEIN-RELATED"/>
    <property type="match status" value="1"/>
</dbReference>
<dbReference type="PANTHER" id="PTHR11991:SF0">
    <property type="entry name" value="TRANSLATIONALLY-CONTROLLED TUMOR PROTEIN"/>
    <property type="match status" value="1"/>
</dbReference>
<dbReference type="Pfam" id="PF00838">
    <property type="entry name" value="TCTP"/>
    <property type="match status" value="1"/>
</dbReference>
<dbReference type="PRINTS" id="PR01653">
    <property type="entry name" value="TCTPROTEIN"/>
</dbReference>
<dbReference type="SUPFAM" id="SSF51316">
    <property type="entry name" value="Mss4-like"/>
    <property type="match status" value="1"/>
</dbReference>
<dbReference type="PROSITE" id="PS01002">
    <property type="entry name" value="TCTP_1"/>
    <property type="match status" value="1"/>
</dbReference>
<dbReference type="PROSITE" id="PS51797">
    <property type="entry name" value="TCTP_3"/>
    <property type="match status" value="1"/>
</dbReference>
<protein>
    <recommendedName>
        <fullName>Translationally-controlled tumor protein homolog</fullName>
        <shortName>TCTP</shortName>
    </recommendedName>
    <alternativeName>
        <fullName>Histamine-releasing factor</fullName>
    </alternativeName>
</protein>
<reference key="1">
    <citation type="submission" date="2001-03" db="EMBL/GenBank/DDBJ databases">
        <title>Molecular cloning of histamine releasing factor from Schistosoma mansoni.</title>
        <authorList>
            <person name="Rao K.V.N."/>
            <person name="Ramaswamy K."/>
        </authorList>
    </citation>
    <scope>NUCLEOTIDE SEQUENCE [MRNA]</scope>
</reference>
<sequence length="166" mass="19049">MIVYKDMITEDEMFTDSHCPRVVADFFYEVDSRFTTVSSNVDGRLIGANPSGEGGEDENVDDTSKRVIDLVHANGFISVPFDQKSYKAHLNLYLKTIIERLQKTDPDKVPLLKSQVNKYMKNVLDNFDQYEFYMGPPSNPDAMIVLMNFREDGMTPYFVFFKDGLT</sequence>
<feature type="chain" id="PRO_0000211295" description="Translationally-controlled tumor protein homolog">
    <location>
        <begin position="1"/>
        <end position="166" status="greater than"/>
    </location>
</feature>
<feature type="domain" description="TCTP" evidence="2">
    <location>
        <begin position="1"/>
        <end position="166" status="greater than"/>
    </location>
</feature>
<feature type="non-terminal residue">
    <location>
        <position position="166"/>
    </location>
</feature>
<organism>
    <name type="scientific">Schistosoma mansoni</name>
    <name type="common">Blood fluke</name>
    <dbReference type="NCBI Taxonomy" id="6183"/>
    <lineage>
        <taxon>Eukaryota</taxon>
        <taxon>Metazoa</taxon>
        <taxon>Spiralia</taxon>
        <taxon>Lophotrochozoa</taxon>
        <taxon>Platyhelminthes</taxon>
        <taxon>Trematoda</taxon>
        <taxon>Digenea</taxon>
        <taxon>Strigeidida</taxon>
        <taxon>Schistosomatoidea</taxon>
        <taxon>Schistosomatidae</taxon>
        <taxon>Schistosoma</taxon>
    </lineage>
</organism>
<gene>
    <name type="primary">TCTP</name>
</gene>
<keyword id="KW-0106">Calcium</keyword>
<keyword id="KW-0963">Cytoplasm</keyword>
<keyword id="KW-1185">Reference proteome</keyword>
<accession>Q95WA2</accession>
<name>TCTP_SCHMA</name>
<evidence type="ECO:0000250" key="1"/>
<evidence type="ECO:0000255" key="2">
    <source>
        <dbReference type="PROSITE-ProRule" id="PRU01133"/>
    </source>
</evidence>
<comment type="function">
    <text evidence="1">Involved in calcium binding and microtubule stabilization.</text>
</comment>
<comment type="subcellular location">
    <subcellularLocation>
        <location evidence="1">Cytoplasm</location>
    </subcellularLocation>
</comment>
<comment type="similarity">
    <text evidence="2">Belongs to the TCTP family.</text>
</comment>
<proteinExistence type="evidence at transcript level"/>